<dbReference type="EMBL" id="AF197837">
    <property type="protein sequence ID" value="AAF13416.1"/>
    <property type="molecule type" value="Genomic_DNA"/>
</dbReference>
<dbReference type="SMR" id="Q9TAD3"/>
<dbReference type="GO" id="GO:0005743">
    <property type="term" value="C:mitochondrial inner membrane"/>
    <property type="evidence" value="ECO:0007669"/>
    <property type="project" value="UniProtKB-SubCell"/>
</dbReference>
<dbReference type="GO" id="GO:0045275">
    <property type="term" value="C:respiratory chain complex III"/>
    <property type="evidence" value="ECO:0007669"/>
    <property type="project" value="InterPro"/>
</dbReference>
<dbReference type="GO" id="GO:0046872">
    <property type="term" value="F:metal ion binding"/>
    <property type="evidence" value="ECO:0007669"/>
    <property type="project" value="UniProtKB-KW"/>
</dbReference>
<dbReference type="GO" id="GO:0008121">
    <property type="term" value="F:ubiquinol-cytochrome-c reductase activity"/>
    <property type="evidence" value="ECO:0007669"/>
    <property type="project" value="InterPro"/>
</dbReference>
<dbReference type="GO" id="GO:0006122">
    <property type="term" value="P:mitochondrial electron transport, ubiquinol to cytochrome c"/>
    <property type="evidence" value="ECO:0007669"/>
    <property type="project" value="TreeGrafter"/>
</dbReference>
<dbReference type="CDD" id="cd00290">
    <property type="entry name" value="cytochrome_b_C"/>
    <property type="match status" value="1"/>
</dbReference>
<dbReference type="CDD" id="cd00284">
    <property type="entry name" value="Cytochrome_b_N"/>
    <property type="match status" value="1"/>
</dbReference>
<dbReference type="FunFam" id="1.20.810.10:FF:000002">
    <property type="entry name" value="Cytochrome b"/>
    <property type="match status" value="1"/>
</dbReference>
<dbReference type="Gene3D" id="1.20.810.10">
    <property type="entry name" value="Cytochrome Bc1 Complex, Chain C"/>
    <property type="match status" value="1"/>
</dbReference>
<dbReference type="InterPro" id="IPR005798">
    <property type="entry name" value="Cyt_b/b6_C"/>
</dbReference>
<dbReference type="InterPro" id="IPR036150">
    <property type="entry name" value="Cyt_b/b6_C_sf"/>
</dbReference>
<dbReference type="InterPro" id="IPR005797">
    <property type="entry name" value="Cyt_b/b6_N"/>
</dbReference>
<dbReference type="InterPro" id="IPR027387">
    <property type="entry name" value="Cytb/b6-like_sf"/>
</dbReference>
<dbReference type="InterPro" id="IPR030689">
    <property type="entry name" value="Cytochrome_b"/>
</dbReference>
<dbReference type="InterPro" id="IPR048260">
    <property type="entry name" value="Cytochrome_b_C_euk/bac"/>
</dbReference>
<dbReference type="InterPro" id="IPR048259">
    <property type="entry name" value="Cytochrome_b_N_euk/bac"/>
</dbReference>
<dbReference type="InterPro" id="IPR016174">
    <property type="entry name" value="Di-haem_cyt_TM"/>
</dbReference>
<dbReference type="PANTHER" id="PTHR19271">
    <property type="entry name" value="CYTOCHROME B"/>
    <property type="match status" value="1"/>
</dbReference>
<dbReference type="PANTHER" id="PTHR19271:SF16">
    <property type="entry name" value="CYTOCHROME B"/>
    <property type="match status" value="1"/>
</dbReference>
<dbReference type="Pfam" id="PF00032">
    <property type="entry name" value="Cytochrom_B_C"/>
    <property type="match status" value="1"/>
</dbReference>
<dbReference type="Pfam" id="PF00033">
    <property type="entry name" value="Cytochrome_B"/>
    <property type="match status" value="1"/>
</dbReference>
<dbReference type="PIRSF" id="PIRSF038885">
    <property type="entry name" value="COB"/>
    <property type="match status" value="1"/>
</dbReference>
<dbReference type="SUPFAM" id="SSF81648">
    <property type="entry name" value="a domain/subunit of cytochrome bc1 complex (Ubiquinol-cytochrome c reductase)"/>
    <property type="match status" value="1"/>
</dbReference>
<dbReference type="SUPFAM" id="SSF81342">
    <property type="entry name" value="Transmembrane di-heme cytochromes"/>
    <property type="match status" value="1"/>
</dbReference>
<dbReference type="PROSITE" id="PS51003">
    <property type="entry name" value="CYTB_CTER"/>
    <property type="match status" value="1"/>
</dbReference>
<dbReference type="PROSITE" id="PS51002">
    <property type="entry name" value="CYTB_NTER"/>
    <property type="match status" value="1"/>
</dbReference>
<geneLocation type="mitochondrion"/>
<protein>
    <recommendedName>
        <fullName>Cytochrome b</fullName>
    </recommendedName>
    <alternativeName>
        <fullName>Complex III subunit 3</fullName>
    </alternativeName>
    <alternativeName>
        <fullName>Complex III subunit III</fullName>
    </alternativeName>
    <alternativeName>
        <fullName>Cytochrome b-c1 complex subunit 3</fullName>
    </alternativeName>
    <alternativeName>
        <fullName>Ubiquinol-cytochrome-c reductase complex cytochrome b subunit</fullName>
    </alternativeName>
</protein>
<accession>Q9TAD3</accession>
<proteinExistence type="inferred from homology"/>
<feature type="chain" id="PRO_0000060808" description="Cytochrome b">
    <location>
        <begin position="1"/>
        <end position="380"/>
    </location>
</feature>
<feature type="transmembrane region" description="Helical" evidence="2">
    <location>
        <begin position="34"/>
        <end position="54"/>
    </location>
</feature>
<feature type="transmembrane region" description="Helical" evidence="2">
    <location>
        <begin position="78"/>
        <end position="99"/>
    </location>
</feature>
<feature type="transmembrane region" description="Helical" evidence="2">
    <location>
        <begin position="114"/>
        <end position="134"/>
    </location>
</feature>
<feature type="transmembrane region" description="Helical" evidence="2">
    <location>
        <begin position="179"/>
        <end position="199"/>
    </location>
</feature>
<feature type="transmembrane region" description="Helical" evidence="2">
    <location>
        <begin position="227"/>
        <end position="247"/>
    </location>
</feature>
<feature type="transmembrane region" description="Helical" evidence="2">
    <location>
        <begin position="289"/>
        <end position="309"/>
    </location>
</feature>
<feature type="transmembrane region" description="Helical" evidence="2">
    <location>
        <begin position="321"/>
        <end position="341"/>
    </location>
</feature>
<feature type="transmembrane region" description="Helical" evidence="2">
    <location>
        <begin position="348"/>
        <end position="368"/>
    </location>
</feature>
<feature type="binding site" description="axial binding residue" evidence="2">
    <location>
        <position position="84"/>
    </location>
    <ligand>
        <name>heme b</name>
        <dbReference type="ChEBI" id="CHEBI:60344"/>
        <label>b562</label>
    </ligand>
    <ligandPart>
        <name>Fe</name>
        <dbReference type="ChEBI" id="CHEBI:18248"/>
    </ligandPart>
</feature>
<feature type="binding site" description="axial binding residue" evidence="2">
    <location>
        <position position="98"/>
    </location>
    <ligand>
        <name>heme b</name>
        <dbReference type="ChEBI" id="CHEBI:60344"/>
        <label>b566</label>
    </ligand>
    <ligandPart>
        <name>Fe</name>
        <dbReference type="ChEBI" id="CHEBI:18248"/>
    </ligandPart>
</feature>
<feature type="binding site" description="axial binding residue" evidence="2">
    <location>
        <position position="183"/>
    </location>
    <ligand>
        <name>heme b</name>
        <dbReference type="ChEBI" id="CHEBI:60344"/>
        <label>b562</label>
    </ligand>
    <ligandPart>
        <name>Fe</name>
        <dbReference type="ChEBI" id="CHEBI:18248"/>
    </ligandPart>
</feature>
<feature type="binding site" description="axial binding residue" evidence="2">
    <location>
        <position position="197"/>
    </location>
    <ligand>
        <name>heme b</name>
        <dbReference type="ChEBI" id="CHEBI:60344"/>
        <label>b566</label>
    </ligand>
    <ligandPart>
        <name>Fe</name>
        <dbReference type="ChEBI" id="CHEBI:18248"/>
    </ligandPart>
</feature>
<feature type="binding site" evidence="2">
    <location>
        <position position="202"/>
    </location>
    <ligand>
        <name>a ubiquinone</name>
        <dbReference type="ChEBI" id="CHEBI:16389"/>
    </ligand>
</feature>
<sequence>MALNLRKNHPLLKIINNSLVDLPTPSNISAWWNFGSLLGLCLITQIVTGLLLAMHYTADTSLAFTSVSHMCRDVQFGWLIRNLHANGASFFFICIYLHIGRGIYYGSYLNKETWNIGVILLLTLMATAFVGYVLPWGQMSFWGATVITNLFSAIPYIGQTLVEWLWGGFSVDNPTLTRFFAFHFLLPFVIAGLTLVHLTFLHETGSNNPLGIPSDCDKIPFHPYYSIKDLLGFALMLIPFITLALFSPNLLGDPENFTPANPLTTPPHIKPEWYFLFAYAILRSIPNKLGGVLALAASILVLFLMPLLHVSKQRSMTFRPLSQILFWTLVADLCILTWVGSQPVEHPFIIIGQLASFTYFAIILILFPIAGVLENKMLKL</sequence>
<organism>
    <name type="scientific">Corvus coronoides</name>
    <name type="common">Australian raven</name>
    <dbReference type="NCBI Taxonomy" id="108826"/>
    <lineage>
        <taxon>Eukaryota</taxon>
        <taxon>Metazoa</taxon>
        <taxon>Chordata</taxon>
        <taxon>Craniata</taxon>
        <taxon>Vertebrata</taxon>
        <taxon>Euteleostomi</taxon>
        <taxon>Archelosauria</taxon>
        <taxon>Archosauria</taxon>
        <taxon>Dinosauria</taxon>
        <taxon>Saurischia</taxon>
        <taxon>Theropoda</taxon>
        <taxon>Coelurosauria</taxon>
        <taxon>Aves</taxon>
        <taxon>Neognathae</taxon>
        <taxon>Neoaves</taxon>
        <taxon>Telluraves</taxon>
        <taxon>Australaves</taxon>
        <taxon>Passeriformes</taxon>
        <taxon>Corvoidea</taxon>
        <taxon>Corvidae</taxon>
        <taxon>Corvus</taxon>
    </lineage>
</organism>
<evidence type="ECO:0000250" key="1"/>
<evidence type="ECO:0000250" key="2">
    <source>
        <dbReference type="UniProtKB" id="P00157"/>
    </source>
</evidence>
<evidence type="ECO:0000255" key="3">
    <source>
        <dbReference type="PROSITE-ProRule" id="PRU00967"/>
    </source>
</evidence>
<evidence type="ECO:0000255" key="4">
    <source>
        <dbReference type="PROSITE-ProRule" id="PRU00968"/>
    </source>
</evidence>
<keyword id="KW-0249">Electron transport</keyword>
<keyword id="KW-0349">Heme</keyword>
<keyword id="KW-0408">Iron</keyword>
<keyword id="KW-0472">Membrane</keyword>
<keyword id="KW-0479">Metal-binding</keyword>
<keyword id="KW-0496">Mitochondrion</keyword>
<keyword id="KW-0999">Mitochondrion inner membrane</keyword>
<keyword id="KW-0679">Respiratory chain</keyword>
<keyword id="KW-0812">Transmembrane</keyword>
<keyword id="KW-1133">Transmembrane helix</keyword>
<keyword id="KW-0813">Transport</keyword>
<keyword id="KW-0830">Ubiquinone</keyword>
<name>CYB_CORCD</name>
<gene>
    <name type="primary">MT-CYB</name>
    <name type="synonym">COB</name>
    <name type="synonym">CYTB</name>
    <name type="synonym">MTCYB</name>
</gene>
<comment type="function">
    <text evidence="2">Component of the ubiquinol-cytochrome c reductase complex (complex III or cytochrome b-c1 complex) that is part of the mitochondrial respiratory chain. The b-c1 complex mediates electron transfer from ubiquinol to cytochrome c. Contributes to the generation of a proton gradient across the mitochondrial membrane that is then used for ATP synthesis.</text>
</comment>
<comment type="cofactor">
    <cofactor evidence="2">
        <name>heme b</name>
        <dbReference type="ChEBI" id="CHEBI:60344"/>
    </cofactor>
    <text evidence="2">Binds 2 heme b groups non-covalently.</text>
</comment>
<comment type="subunit">
    <text evidence="2">The cytochrome bc1 complex contains 11 subunits: 3 respiratory subunits (MT-CYB, CYC1 and UQCRFS1), 2 core proteins (UQCRC1 and UQCRC2) and 6 low-molecular weight proteins (UQCRH/QCR6, UQCRB/QCR7, UQCRQ/QCR8, UQCR10/QCR9, UQCR11/QCR10 and a cleavage product of UQCRFS1). This cytochrome bc1 complex then forms a dimer.</text>
</comment>
<comment type="subcellular location">
    <subcellularLocation>
        <location evidence="2">Mitochondrion inner membrane</location>
        <topology evidence="2">Multi-pass membrane protein</topology>
    </subcellularLocation>
</comment>
<comment type="miscellaneous">
    <text evidence="1">Heme 1 (or BL or b562) is low-potential and absorbs at about 562 nm, and heme 2 (or BH or b566) is high-potential and absorbs at about 566 nm.</text>
</comment>
<comment type="similarity">
    <text evidence="3 4">Belongs to the cytochrome b family.</text>
</comment>
<comment type="caution">
    <text evidence="2">The full-length protein contains only eight transmembrane helices, not nine as predicted by bioinformatics tools.</text>
</comment>
<reference key="1">
    <citation type="journal article" date="2000" name="Proc. R. Soc. B">
        <title>What is not a bird of paradise? Molecular and morphological evidence places Macgregoria in the Meliphagidae and the Cnemophilinae near the base of the corvoid tree.</title>
        <authorList>
            <person name="Cracraft J."/>
            <person name="Feinstein J."/>
        </authorList>
    </citation>
    <scope>NUCLEOTIDE SEQUENCE [GENOMIC DNA]</scope>
</reference>